<sequence>MSSTGPGRRVCRQARIGHVLMGGTAPVVVQSMTNTDTADAAATALQVFDLWQAGSEVVRITVNSPEAAARVAEIRLRLDDMGCTAPLVGDFHFNGDRLLRDYPDCARALAKYRINPGNVGKGAKGDDKFAFMIRQAIEYDKAVRIGVNWGSLDQTLANRLMDENARRPHPLPAEAIMREALIISALDNAEKAVGLGLSPDQVILSCKVSHVQDLIAVYRELARRCDYALHLGLTEAGMGSKGIVASTAALSVLLQEGIGDTIRVSLTPEPGESRTKEVVVAQEILQTMGIRSFTPLVTACPGCGRTTSTFFQELAQRIQGYLREQMPLWRAEYPGVEMLNVAVMGCVVNGPGESKLADVGISLPGTGEVPVAPVYVDGEKTVTLKGERIAEEFQAIVDAYVRKNYGEGGAKRRRVIAVRPA</sequence>
<protein>
    <recommendedName>
        <fullName evidence="1">4-hydroxy-3-methylbut-2-en-1-yl diphosphate synthase (flavodoxin)</fullName>
        <ecNumber evidence="1">1.17.7.3</ecNumber>
    </recommendedName>
    <alternativeName>
        <fullName evidence="1">1-hydroxy-2-methyl-2-(E)-butenyl 4-diphosphate synthase</fullName>
    </alternativeName>
</protein>
<dbReference type="EC" id="1.17.7.3" evidence="1"/>
<dbReference type="EMBL" id="CP001154">
    <property type="protein sequence ID" value="ACO73678.1"/>
    <property type="molecule type" value="Genomic_DNA"/>
</dbReference>
<dbReference type="RefSeq" id="WP_012696170.1">
    <property type="nucleotide sequence ID" value="NC_012559.1"/>
</dbReference>
<dbReference type="SMR" id="C1DD43"/>
<dbReference type="STRING" id="557598.LHK_00685"/>
<dbReference type="KEGG" id="lhk:LHK_00685"/>
<dbReference type="eggNOG" id="COG0821">
    <property type="taxonomic scope" value="Bacteria"/>
</dbReference>
<dbReference type="HOGENOM" id="CLU_042258_1_0_4"/>
<dbReference type="UniPathway" id="UPA00056">
    <property type="reaction ID" value="UER00096"/>
</dbReference>
<dbReference type="Proteomes" id="UP000002010">
    <property type="component" value="Chromosome"/>
</dbReference>
<dbReference type="GO" id="GO:0051539">
    <property type="term" value="F:4 iron, 4 sulfur cluster binding"/>
    <property type="evidence" value="ECO:0007669"/>
    <property type="project" value="UniProtKB-UniRule"/>
</dbReference>
<dbReference type="GO" id="GO:0046429">
    <property type="term" value="F:4-hydroxy-3-methylbut-2-en-1-yl diphosphate synthase activity (ferredoxin)"/>
    <property type="evidence" value="ECO:0007669"/>
    <property type="project" value="UniProtKB-UniRule"/>
</dbReference>
<dbReference type="GO" id="GO:0141197">
    <property type="term" value="F:4-hydroxy-3-methylbut-2-enyl-diphosphate synthase activity (flavodoxin)"/>
    <property type="evidence" value="ECO:0007669"/>
    <property type="project" value="UniProtKB-EC"/>
</dbReference>
<dbReference type="GO" id="GO:0005506">
    <property type="term" value="F:iron ion binding"/>
    <property type="evidence" value="ECO:0007669"/>
    <property type="project" value="InterPro"/>
</dbReference>
<dbReference type="GO" id="GO:0019288">
    <property type="term" value="P:isopentenyl diphosphate biosynthetic process, methylerythritol 4-phosphate pathway"/>
    <property type="evidence" value="ECO:0007669"/>
    <property type="project" value="UniProtKB-UniRule"/>
</dbReference>
<dbReference type="GO" id="GO:0016114">
    <property type="term" value="P:terpenoid biosynthetic process"/>
    <property type="evidence" value="ECO:0007669"/>
    <property type="project" value="InterPro"/>
</dbReference>
<dbReference type="FunFam" id="3.30.413.10:FF:000012">
    <property type="entry name" value="4-hydroxy-3-methylbut-2-en-1-yl diphosphate synthase (flavodoxin)"/>
    <property type="match status" value="1"/>
</dbReference>
<dbReference type="Gene3D" id="3.20.20.20">
    <property type="entry name" value="Dihydropteroate synthase-like"/>
    <property type="match status" value="1"/>
</dbReference>
<dbReference type="Gene3D" id="3.30.413.10">
    <property type="entry name" value="Sulfite Reductase Hemoprotein, domain 1"/>
    <property type="match status" value="1"/>
</dbReference>
<dbReference type="HAMAP" id="MF_00159">
    <property type="entry name" value="IspG"/>
    <property type="match status" value="1"/>
</dbReference>
<dbReference type="InterPro" id="IPR011005">
    <property type="entry name" value="Dihydropteroate_synth-like_sf"/>
</dbReference>
<dbReference type="InterPro" id="IPR016425">
    <property type="entry name" value="IspG_bac"/>
</dbReference>
<dbReference type="InterPro" id="IPR004588">
    <property type="entry name" value="IspG_bac-typ"/>
</dbReference>
<dbReference type="InterPro" id="IPR045854">
    <property type="entry name" value="NO2/SO3_Rdtase_4Fe4S_sf"/>
</dbReference>
<dbReference type="NCBIfam" id="TIGR00612">
    <property type="entry name" value="ispG_gcpE"/>
    <property type="match status" value="1"/>
</dbReference>
<dbReference type="NCBIfam" id="NF001540">
    <property type="entry name" value="PRK00366.1"/>
    <property type="match status" value="1"/>
</dbReference>
<dbReference type="PANTHER" id="PTHR30454">
    <property type="entry name" value="4-HYDROXY-3-METHYLBUT-2-EN-1-YL DIPHOSPHATE SYNTHASE"/>
    <property type="match status" value="1"/>
</dbReference>
<dbReference type="PANTHER" id="PTHR30454:SF0">
    <property type="entry name" value="4-HYDROXY-3-METHYLBUT-2-EN-1-YL DIPHOSPHATE SYNTHASE (FERREDOXIN), CHLOROPLASTIC"/>
    <property type="match status" value="1"/>
</dbReference>
<dbReference type="Pfam" id="PF04551">
    <property type="entry name" value="GcpE"/>
    <property type="match status" value="1"/>
</dbReference>
<dbReference type="PIRSF" id="PIRSF004640">
    <property type="entry name" value="IspG"/>
    <property type="match status" value="1"/>
</dbReference>
<dbReference type="SUPFAM" id="SSF56014">
    <property type="entry name" value="Nitrite and sulphite reductase 4Fe-4S domain-like"/>
    <property type="match status" value="1"/>
</dbReference>
<reference key="1">
    <citation type="journal article" date="2009" name="PLoS Genet.">
        <title>The complete genome and proteome of Laribacter hongkongensis reveal potential mechanisms for adaptations to different temperatures and habitats.</title>
        <authorList>
            <person name="Woo P.C.Y."/>
            <person name="Lau S.K.P."/>
            <person name="Tse H."/>
            <person name="Teng J.L.L."/>
            <person name="Curreem S.O."/>
            <person name="Tsang A.K.L."/>
            <person name="Fan R.Y.Y."/>
            <person name="Wong G.K.M."/>
            <person name="Huang Y."/>
            <person name="Loman N.J."/>
            <person name="Snyder L.A.S."/>
            <person name="Cai J.J."/>
            <person name="Huang J.-D."/>
            <person name="Mak W."/>
            <person name="Pallen M.J."/>
            <person name="Lok S."/>
            <person name="Yuen K.-Y."/>
        </authorList>
    </citation>
    <scope>NUCLEOTIDE SEQUENCE [LARGE SCALE GENOMIC DNA]</scope>
    <source>
        <strain>HLHK9</strain>
    </source>
</reference>
<evidence type="ECO:0000255" key="1">
    <source>
        <dbReference type="HAMAP-Rule" id="MF_00159"/>
    </source>
</evidence>
<accession>C1DD43</accession>
<keyword id="KW-0004">4Fe-4S</keyword>
<keyword id="KW-0408">Iron</keyword>
<keyword id="KW-0411">Iron-sulfur</keyword>
<keyword id="KW-0414">Isoprene biosynthesis</keyword>
<keyword id="KW-0479">Metal-binding</keyword>
<keyword id="KW-0560">Oxidoreductase</keyword>
<keyword id="KW-1185">Reference proteome</keyword>
<gene>
    <name evidence="1" type="primary">ispG</name>
    <name type="ordered locus">LHK_00685</name>
</gene>
<name>ISPG_LARHH</name>
<organism>
    <name type="scientific">Laribacter hongkongensis (strain HLHK9)</name>
    <dbReference type="NCBI Taxonomy" id="557598"/>
    <lineage>
        <taxon>Bacteria</taxon>
        <taxon>Pseudomonadati</taxon>
        <taxon>Pseudomonadota</taxon>
        <taxon>Betaproteobacteria</taxon>
        <taxon>Neisseriales</taxon>
        <taxon>Aquaspirillaceae</taxon>
        <taxon>Laribacter</taxon>
    </lineage>
</organism>
<proteinExistence type="inferred from homology"/>
<comment type="function">
    <text evidence="1">Converts 2C-methyl-D-erythritol 2,4-cyclodiphosphate (ME-2,4cPP) into 1-hydroxy-2-methyl-2-(E)-butenyl 4-diphosphate.</text>
</comment>
<comment type="catalytic activity">
    <reaction evidence="1">
        <text>(2E)-4-hydroxy-3-methylbut-2-enyl diphosphate + oxidized [flavodoxin] + H2O + 2 H(+) = 2-C-methyl-D-erythritol 2,4-cyclic diphosphate + reduced [flavodoxin]</text>
        <dbReference type="Rhea" id="RHEA:43604"/>
        <dbReference type="Rhea" id="RHEA-COMP:10622"/>
        <dbReference type="Rhea" id="RHEA-COMP:10623"/>
        <dbReference type="ChEBI" id="CHEBI:15377"/>
        <dbReference type="ChEBI" id="CHEBI:15378"/>
        <dbReference type="ChEBI" id="CHEBI:57618"/>
        <dbReference type="ChEBI" id="CHEBI:58210"/>
        <dbReference type="ChEBI" id="CHEBI:58483"/>
        <dbReference type="ChEBI" id="CHEBI:128753"/>
        <dbReference type="EC" id="1.17.7.3"/>
    </reaction>
</comment>
<comment type="cofactor">
    <cofactor evidence="1">
        <name>[4Fe-4S] cluster</name>
        <dbReference type="ChEBI" id="CHEBI:49883"/>
    </cofactor>
    <text evidence="1">Binds 1 [4Fe-4S] cluster.</text>
</comment>
<comment type="pathway">
    <text evidence="1">Isoprenoid biosynthesis; isopentenyl diphosphate biosynthesis via DXP pathway; isopentenyl diphosphate from 1-deoxy-D-xylulose 5-phosphate: step 5/6.</text>
</comment>
<comment type="similarity">
    <text evidence="1">Belongs to the IspG family.</text>
</comment>
<feature type="chain" id="PRO_1000123451" description="4-hydroxy-3-methylbut-2-en-1-yl diphosphate synthase (flavodoxin)">
    <location>
        <begin position="1"/>
        <end position="421"/>
    </location>
</feature>
<feature type="binding site" evidence="1">
    <location>
        <position position="300"/>
    </location>
    <ligand>
        <name>[4Fe-4S] cluster</name>
        <dbReference type="ChEBI" id="CHEBI:49883"/>
    </ligand>
</feature>
<feature type="binding site" evidence="1">
    <location>
        <position position="303"/>
    </location>
    <ligand>
        <name>[4Fe-4S] cluster</name>
        <dbReference type="ChEBI" id="CHEBI:49883"/>
    </ligand>
</feature>
<feature type="binding site" evidence="1">
    <location>
        <position position="346"/>
    </location>
    <ligand>
        <name>[4Fe-4S] cluster</name>
        <dbReference type="ChEBI" id="CHEBI:49883"/>
    </ligand>
</feature>
<feature type="binding site" evidence="1">
    <location>
        <position position="353"/>
    </location>
    <ligand>
        <name>[4Fe-4S] cluster</name>
        <dbReference type="ChEBI" id="CHEBI:49883"/>
    </ligand>
</feature>